<feature type="signal peptide" evidence="2">
    <location>
        <begin position="1"/>
        <end position="27"/>
    </location>
</feature>
<feature type="chain" id="PRO_0000314020" description="Protein canopy 4">
    <location>
        <begin position="28"/>
        <end position="217"/>
    </location>
</feature>
<feature type="region of interest" description="Disordered" evidence="3">
    <location>
        <begin position="194"/>
        <end position="217"/>
    </location>
</feature>
<feature type="compositionally biased region" description="Basic and acidic residues" evidence="3">
    <location>
        <begin position="205"/>
        <end position="217"/>
    </location>
</feature>
<feature type="disulfide bond" evidence="1">
    <location>
        <begin position="27"/>
        <end position="185"/>
    </location>
</feature>
<feature type="disulfide bond" evidence="1">
    <location>
        <begin position="30"/>
        <end position="173"/>
    </location>
</feature>
<feature type="disulfide bond" evidence="1">
    <location>
        <begin position="83"/>
        <end position="145"/>
    </location>
</feature>
<evidence type="ECO:0000250" key="1"/>
<evidence type="ECO:0000255" key="2"/>
<evidence type="ECO:0000256" key="3">
    <source>
        <dbReference type="SAM" id="MobiDB-lite"/>
    </source>
</evidence>
<evidence type="ECO:0000269" key="4">
    <source>
    </source>
</evidence>
<evidence type="ECO:0000305" key="5"/>
<name>CNPY4_DANRE</name>
<keyword id="KW-1015">Disulfide bond</keyword>
<keyword id="KW-1185">Reference proteome</keyword>
<keyword id="KW-0964">Secreted</keyword>
<keyword id="KW-0732">Signal</keyword>
<organism>
    <name type="scientific">Danio rerio</name>
    <name type="common">Zebrafish</name>
    <name type="synonym">Brachydanio rerio</name>
    <dbReference type="NCBI Taxonomy" id="7955"/>
    <lineage>
        <taxon>Eukaryota</taxon>
        <taxon>Metazoa</taxon>
        <taxon>Chordata</taxon>
        <taxon>Craniata</taxon>
        <taxon>Vertebrata</taxon>
        <taxon>Euteleostomi</taxon>
        <taxon>Actinopterygii</taxon>
        <taxon>Neopterygii</taxon>
        <taxon>Teleostei</taxon>
        <taxon>Ostariophysi</taxon>
        <taxon>Cypriniformes</taxon>
        <taxon>Danionidae</taxon>
        <taxon>Danioninae</taxon>
        <taxon>Danio</taxon>
    </lineage>
</organism>
<dbReference type="EMBL" id="AB201386">
    <property type="protein sequence ID" value="BAE78827.1"/>
    <property type="molecule type" value="mRNA"/>
</dbReference>
<dbReference type="EMBL" id="BC121734">
    <property type="protein sequence ID" value="AAI21735.1"/>
    <property type="molecule type" value="mRNA"/>
</dbReference>
<dbReference type="EMBL" id="BC152092">
    <property type="protein sequence ID" value="AAI52093.1"/>
    <property type="molecule type" value="mRNA"/>
</dbReference>
<dbReference type="RefSeq" id="NP_001034602.1">
    <property type="nucleotide sequence ID" value="NM_001039513.1"/>
</dbReference>
<dbReference type="FunCoup" id="Q2L6K8">
    <property type="interactions" value="819"/>
</dbReference>
<dbReference type="STRING" id="7955.ENSDARP00000072654"/>
<dbReference type="PaxDb" id="7955-ENSDARP00000072654"/>
<dbReference type="Ensembl" id="ENSDART00000078192">
    <property type="protein sequence ID" value="ENSDARP00000072654"/>
    <property type="gene ID" value="ENSDARG00000055797"/>
</dbReference>
<dbReference type="GeneID" id="568776"/>
<dbReference type="KEGG" id="dre:568776"/>
<dbReference type="AGR" id="ZFIN:ZDB-GENE-060315-5"/>
<dbReference type="CTD" id="245812"/>
<dbReference type="ZFIN" id="ZDB-GENE-060315-5">
    <property type="gene designation" value="cnpy4"/>
</dbReference>
<dbReference type="eggNOG" id="KOG4052">
    <property type="taxonomic scope" value="Eukaryota"/>
</dbReference>
<dbReference type="HOGENOM" id="CLU_078068_0_1_1"/>
<dbReference type="InParanoid" id="Q2L6K8"/>
<dbReference type="OMA" id="TTLKTQC"/>
<dbReference type="OrthoDB" id="6020060at2759"/>
<dbReference type="PhylomeDB" id="Q2L6K8"/>
<dbReference type="TreeFam" id="TF318951"/>
<dbReference type="PRO" id="PR:Q2L6K8"/>
<dbReference type="Proteomes" id="UP000000437">
    <property type="component" value="Alternate scaffold 7"/>
</dbReference>
<dbReference type="Proteomes" id="UP000000437">
    <property type="component" value="Chromosome 7"/>
</dbReference>
<dbReference type="Bgee" id="ENSDARG00000055797">
    <property type="expression patterns" value="Expressed in swim bladder and 27 other cell types or tissues"/>
</dbReference>
<dbReference type="ExpressionAtlas" id="Q2L6K8">
    <property type="expression patterns" value="baseline and differential"/>
</dbReference>
<dbReference type="GO" id="GO:0005576">
    <property type="term" value="C:extracellular region"/>
    <property type="evidence" value="ECO:0007669"/>
    <property type="project" value="UniProtKB-SubCell"/>
</dbReference>
<dbReference type="GO" id="GO:0005102">
    <property type="term" value="F:signaling receptor binding"/>
    <property type="evidence" value="ECO:0000318"/>
    <property type="project" value="GO_Central"/>
</dbReference>
<dbReference type="InterPro" id="IPR021852">
    <property type="entry name" value="DUF3456"/>
</dbReference>
<dbReference type="PANTHER" id="PTHR15382">
    <property type="entry name" value="CTG4A-RELATED"/>
    <property type="match status" value="1"/>
</dbReference>
<dbReference type="PANTHER" id="PTHR15382:SF3">
    <property type="entry name" value="PROTEIN CANOPY HOMOLOG 4"/>
    <property type="match status" value="1"/>
</dbReference>
<dbReference type="Pfam" id="PF11938">
    <property type="entry name" value="DUF3456"/>
    <property type="match status" value="1"/>
</dbReference>
<protein>
    <recommendedName>
        <fullName>Protein canopy 4</fullName>
    </recommendedName>
</protein>
<accession>Q2L6K8</accession>
<comment type="subcellular location">
    <subcellularLocation>
        <location evidence="5">Secreted</location>
    </subcellularLocation>
</comment>
<comment type="developmental stage">
    <text evidence="4">Expressed ubiquitously at 18 hours post-fertilization (hpf).</text>
</comment>
<comment type="similarity">
    <text evidence="5">Belongs to the canopy family.</text>
</comment>
<proteinExistence type="evidence at transcript level"/>
<reference key="1">
    <citation type="journal article" date="2006" name="Curr. Biol.">
        <title>Canopy1, a novel regulator of FGF signaling around the midbrain-hindbrain boundary in zebrafish.</title>
        <authorList>
            <person name="Hirate Y."/>
            <person name="Okamoto H."/>
        </authorList>
    </citation>
    <scope>NUCLEOTIDE SEQUENCE [MRNA]</scope>
    <scope>DEVELOPMENTAL STAGE</scope>
</reference>
<reference key="2">
    <citation type="submission" date="2006-08" db="EMBL/GenBank/DDBJ databases">
        <authorList>
            <consortium name="NIH - Zebrafish Gene Collection (ZGC) project"/>
        </authorList>
    </citation>
    <scope>NUCLEOTIDE SEQUENCE [LARGE SCALE MRNA]</scope>
    <source>
        <tissue>Embryo</tissue>
    </source>
</reference>
<gene>
    <name type="primary">cnpy4</name>
</gene>
<sequence>MEMFTVFLFYMFSLVLANQEERLPNKCEVCKLLTVELQDALDKTGRSKEVVELGEVLDTGKRRRKIKYNTSEMRLTEAMDNICERILQYKVHAERPGSLRYAKGTSQTMNTLKNLVEKGVKVELGVPYELWDEPTVEVAELKRQCETMLEEHEEVVEDWYFHHQDKGLERFFCEAHVLKDSDQECLTEIWKGDMGMKGSEEESEGKDGKETHDAGEL</sequence>